<comment type="function">
    <text evidence="1">Catalyzes the reduction of a carbon-carbon double bond in an enoyl moiety that is covalently linked to an acyl carrier protein (ACP). Involved in the elongation cycle of fatty acid which are used in the lipid metabolism (By similarity).</text>
</comment>
<comment type="catalytic activity">
    <reaction>
        <text>a 2,3-saturated acyl-[ACP] + NAD(+) = a (2E)-enoyl-[ACP] + NADH + H(+)</text>
        <dbReference type="Rhea" id="RHEA:10240"/>
        <dbReference type="Rhea" id="RHEA-COMP:9925"/>
        <dbReference type="Rhea" id="RHEA-COMP:9926"/>
        <dbReference type="ChEBI" id="CHEBI:15378"/>
        <dbReference type="ChEBI" id="CHEBI:57540"/>
        <dbReference type="ChEBI" id="CHEBI:57945"/>
        <dbReference type="ChEBI" id="CHEBI:78784"/>
        <dbReference type="ChEBI" id="CHEBI:78785"/>
        <dbReference type="EC" id="1.3.1.9"/>
    </reaction>
</comment>
<comment type="pathway">
    <text>Lipid metabolism; fatty acid biosynthesis.</text>
</comment>
<comment type="subunit">
    <text evidence="1">Homotetramer.</text>
</comment>
<comment type="miscellaneous">
    <text>Present in outer membrane vesicle formulations which are used as vaccines in human.</text>
</comment>
<comment type="similarity">
    <text evidence="2">Belongs to the short-chain dehydrogenases/reductases (SDR) family. FabI subfamily.</text>
</comment>
<reference key="1">
    <citation type="journal article" date="2000" name="Science">
        <title>Complete genome sequence of Neisseria meningitidis serogroup B strain MC58.</title>
        <authorList>
            <person name="Tettelin H."/>
            <person name="Saunders N.J."/>
            <person name="Heidelberg J.F."/>
            <person name="Jeffries A.C."/>
            <person name="Nelson K.E."/>
            <person name="Eisen J.A."/>
            <person name="Ketchum K.A."/>
            <person name="Hood D.W."/>
            <person name="Peden J.F."/>
            <person name="Dodson R.J."/>
            <person name="Nelson W.C."/>
            <person name="Gwinn M.L."/>
            <person name="DeBoy R.T."/>
            <person name="Peterson J.D."/>
            <person name="Hickey E.K."/>
            <person name="Haft D.H."/>
            <person name="Salzberg S.L."/>
            <person name="White O."/>
            <person name="Fleischmann R.D."/>
            <person name="Dougherty B.A."/>
            <person name="Mason T.M."/>
            <person name="Ciecko A."/>
            <person name="Parksey D.S."/>
            <person name="Blair E."/>
            <person name="Cittone H."/>
            <person name="Clark E.B."/>
            <person name="Cotton M.D."/>
            <person name="Utterback T.R."/>
            <person name="Khouri H.M."/>
            <person name="Qin H."/>
            <person name="Vamathevan J.J."/>
            <person name="Gill J."/>
            <person name="Scarlato V."/>
            <person name="Masignani V."/>
            <person name="Pizza M."/>
            <person name="Grandi G."/>
            <person name="Sun L."/>
            <person name="Smith H.O."/>
            <person name="Fraser C.M."/>
            <person name="Moxon E.R."/>
            <person name="Rappuoli R."/>
            <person name="Venter J.C."/>
        </authorList>
    </citation>
    <scope>NUCLEOTIDE SEQUENCE [LARGE SCALE GENOMIC DNA]</scope>
    <source>
        <strain>ATCC BAA-335 / MC58</strain>
    </source>
</reference>
<reference key="2">
    <citation type="journal article" date="2006" name="Proteomics">
        <title>Proteomic analysis of a meningococcal outer membrane vesicle vaccine prepared from the group B strain NZ98/254.</title>
        <authorList>
            <person name="Vipond C."/>
            <person name="Suker J."/>
            <person name="Jones C."/>
            <person name="Tang C."/>
            <person name="Feavers I.M."/>
            <person name="Wheeler J.X."/>
        </authorList>
    </citation>
    <scope>IDENTIFICATION BY MASS SPECTROMETRY [LARGE SCALE ANALYSIS]</scope>
    <source>
        <strain>NZ98/254 / Serogroup B</strain>
    </source>
</reference>
<evidence type="ECO:0000250" key="1"/>
<evidence type="ECO:0000305" key="2"/>
<organism>
    <name type="scientific">Neisseria meningitidis serogroup B (strain ATCC BAA-335 / MC58)</name>
    <dbReference type="NCBI Taxonomy" id="122586"/>
    <lineage>
        <taxon>Bacteria</taxon>
        <taxon>Pseudomonadati</taxon>
        <taxon>Pseudomonadota</taxon>
        <taxon>Betaproteobacteria</taxon>
        <taxon>Neisseriales</taxon>
        <taxon>Neisseriaceae</taxon>
        <taxon>Neisseria</taxon>
    </lineage>
</organism>
<sequence length="261" mass="27691">MGFLQGKKILITGMISERSIAYGIAKACREQGAELAFTYVVDKLEERVRKMAAELDSELVFRCDVASDDEINQVFADLGKHWDGLDGLVHSIGFAPKEALSGDFLDSISREAFNTAHEISAYSLPALAKAARPMMRGRNSAIVALSYLGAVRAIPNYNVMGMAKASLEAGIRFTAACLGKEGIRCNGISAGPIKTLAASGIADFGKLLGHVAAHNPLRRNVTIEEVGNTAAFLLSDLSSGITGEITYVDGGYSINALSTEG</sequence>
<protein>
    <recommendedName>
        <fullName>Enoyl-[acyl-carrier-protein] reductase [NADH] FabI</fullName>
        <shortName>ENR</shortName>
        <ecNumber>1.3.1.9</ecNumber>
    </recommendedName>
    <alternativeName>
        <fullName>NADH-dependent enoyl-ACP reductase</fullName>
    </alternativeName>
</protein>
<keyword id="KW-0275">Fatty acid biosynthesis</keyword>
<keyword id="KW-0276">Fatty acid metabolism</keyword>
<keyword id="KW-0444">Lipid biosynthesis</keyword>
<keyword id="KW-0443">Lipid metabolism</keyword>
<keyword id="KW-0520">NAD</keyword>
<keyword id="KW-0560">Oxidoreductase</keyword>
<keyword id="KW-1185">Reference proteome</keyword>
<dbReference type="EC" id="1.3.1.9"/>
<dbReference type="EMBL" id="AE002098">
    <property type="protein sequence ID" value="AAF40779.1"/>
    <property type="molecule type" value="Genomic_DNA"/>
</dbReference>
<dbReference type="PIR" id="C81211">
    <property type="entry name" value="C81211"/>
</dbReference>
<dbReference type="RefSeq" id="NP_273385.1">
    <property type="nucleotide sequence ID" value="NC_003112.2"/>
</dbReference>
<dbReference type="RefSeq" id="WP_002223367.1">
    <property type="nucleotide sequence ID" value="NC_003112.2"/>
</dbReference>
<dbReference type="SMR" id="Q9K151"/>
<dbReference type="FunCoup" id="Q9K151">
    <property type="interactions" value="354"/>
</dbReference>
<dbReference type="STRING" id="122586.NMB0336"/>
<dbReference type="PaxDb" id="122586-NMB0336"/>
<dbReference type="GeneID" id="93387428"/>
<dbReference type="KEGG" id="nme:NMB0336"/>
<dbReference type="PATRIC" id="fig|122586.8.peg.425"/>
<dbReference type="HOGENOM" id="CLU_010194_10_1_4"/>
<dbReference type="InParanoid" id="Q9K151"/>
<dbReference type="OrthoDB" id="9803628at2"/>
<dbReference type="UniPathway" id="UPA00094"/>
<dbReference type="Proteomes" id="UP000000425">
    <property type="component" value="Chromosome"/>
</dbReference>
<dbReference type="GO" id="GO:0004318">
    <property type="term" value="F:enoyl-[acyl-carrier-protein] reductase (NADH) activity"/>
    <property type="evidence" value="ECO:0000250"/>
    <property type="project" value="UniProtKB"/>
</dbReference>
<dbReference type="GO" id="GO:0042802">
    <property type="term" value="F:identical protein binding"/>
    <property type="evidence" value="ECO:0000250"/>
    <property type="project" value="UniProtKB"/>
</dbReference>
<dbReference type="GO" id="GO:0030497">
    <property type="term" value="P:fatty acid elongation"/>
    <property type="evidence" value="ECO:0000250"/>
    <property type="project" value="UniProtKB"/>
</dbReference>
<dbReference type="CDD" id="cd05372">
    <property type="entry name" value="ENR_SDR"/>
    <property type="match status" value="1"/>
</dbReference>
<dbReference type="FunFam" id="1.10.8.400:FF:000001">
    <property type="entry name" value="Enoyl-[acyl-carrier-protein] reductase [NADH]"/>
    <property type="match status" value="1"/>
</dbReference>
<dbReference type="FunFam" id="3.40.50.720:FF:000054">
    <property type="entry name" value="Enoyl-[acyl-carrier-protein] reductase [NADH]"/>
    <property type="match status" value="1"/>
</dbReference>
<dbReference type="Gene3D" id="1.10.8.400">
    <property type="entry name" value="Enoyl acyl carrier protein reductase"/>
    <property type="match status" value="1"/>
</dbReference>
<dbReference type="Gene3D" id="3.40.50.720">
    <property type="entry name" value="NAD(P)-binding Rossmann-like Domain"/>
    <property type="match status" value="1"/>
</dbReference>
<dbReference type="InterPro" id="IPR014358">
    <property type="entry name" value="Enoyl-ACP_Rdtase_NADH"/>
</dbReference>
<dbReference type="InterPro" id="IPR036291">
    <property type="entry name" value="NAD(P)-bd_dom_sf"/>
</dbReference>
<dbReference type="InterPro" id="IPR002347">
    <property type="entry name" value="SDR_fam"/>
</dbReference>
<dbReference type="NCBIfam" id="NF006428">
    <property type="entry name" value="PRK08690.1"/>
    <property type="match status" value="1"/>
</dbReference>
<dbReference type="PANTHER" id="PTHR43159">
    <property type="entry name" value="ENOYL-[ACYL-CARRIER-PROTEIN] REDUCTASE"/>
    <property type="match status" value="1"/>
</dbReference>
<dbReference type="PANTHER" id="PTHR43159:SF2">
    <property type="entry name" value="ENOYL-[ACYL-CARRIER-PROTEIN] REDUCTASE [NADH], CHLOROPLASTIC"/>
    <property type="match status" value="1"/>
</dbReference>
<dbReference type="Pfam" id="PF13561">
    <property type="entry name" value="adh_short_C2"/>
    <property type="match status" value="1"/>
</dbReference>
<dbReference type="PIRSF" id="PIRSF000094">
    <property type="entry name" value="Enoyl-ACP_rdct"/>
    <property type="match status" value="1"/>
</dbReference>
<dbReference type="PRINTS" id="PR00081">
    <property type="entry name" value="GDHRDH"/>
</dbReference>
<dbReference type="SUPFAM" id="SSF51735">
    <property type="entry name" value="NAD(P)-binding Rossmann-fold domains"/>
    <property type="match status" value="1"/>
</dbReference>
<name>FABI_NEIMB</name>
<accession>Q9K151</accession>
<gene>
    <name type="primary">fabI</name>
    <name type="ordered locus">NMB0336</name>
</gene>
<proteinExistence type="evidence at protein level"/>
<feature type="chain" id="PRO_0000320269" description="Enoyl-[acyl-carrier-protein] reductase [NADH] FabI">
    <location>
        <begin position="1"/>
        <end position="261"/>
    </location>
</feature>
<feature type="active site" description="Proton acceptor" evidence="1">
    <location>
        <position position="147"/>
    </location>
</feature>
<feature type="active site" description="Proton acceptor" evidence="1">
    <location>
        <position position="157"/>
    </location>
</feature>
<feature type="binding site" evidence="1">
    <location>
        <position position="13"/>
    </location>
    <ligand>
        <name>NAD(+)</name>
        <dbReference type="ChEBI" id="CHEBI:57540"/>
    </ligand>
</feature>
<feature type="binding site" evidence="1">
    <location>
        <begin position="19"/>
        <end position="20"/>
    </location>
    <ligand>
        <name>NAD(+)</name>
        <dbReference type="ChEBI" id="CHEBI:57540"/>
    </ligand>
</feature>
<feature type="binding site" evidence="1">
    <location>
        <begin position="64"/>
        <end position="65"/>
    </location>
    <ligand>
        <name>NAD(+)</name>
        <dbReference type="ChEBI" id="CHEBI:57540"/>
    </ligand>
</feature>
<feature type="binding site" evidence="1">
    <location>
        <position position="92"/>
    </location>
    <ligand>
        <name>NAD(+)</name>
        <dbReference type="ChEBI" id="CHEBI:57540"/>
    </ligand>
</feature>
<feature type="binding site" evidence="1">
    <location>
        <position position="95"/>
    </location>
    <ligand>
        <name>substrate</name>
    </ligand>
</feature>
<feature type="binding site" evidence="1">
    <location>
        <position position="164"/>
    </location>
    <ligand>
        <name>NAD(+)</name>
        <dbReference type="ChEBI" id="CHEBI:57540"/>
    </ligand>
</feature>
<feature type="binding site" evidence="1">
    <location>
        <begin position="193"/>
        <end position="197"/>
    </location>
    <ligand>
        <name>NAD(+)</name>
        <dbReference type="ChEBI" id="CHEBI:57540"/>
    </ligand>
</feature>
<feature type="site" description="Involved in acyl-ACP binding" evidence="1">
    <location>
        <position position="206"/>
    </location>
</feature>